<keyword id="KW-0547">Nucleotide-binding</keyword>
<keyword id="KW-1185">Reference proteome</keyword>
<gene>
    <name type="ordered locus">Glov_3198</name>
</gene>
<dbReference type="EMBL" id="CP001089">
    <property type="protein sequence ID" value="ACD96904.1"/>
    <property type="molecule type" value="Genomic_DNA"/>
</dbReference>
<dbReference type="RefSeq" id="WP_012471228.1">
    <property type="nucleotide sequence ID" value="NC_010814.1"/>
</dbReference>
<dbReference type="SMR" id="B3EA29"/>
<dbReference type="STRING" id="398767.Glov_3198"/>
<dbReference type="KEGG" id="glo:Glov_3198"/>
<dbReference type="eggNOG" id="COG1666">
    <property type="taxonomic scope" value="Bacteria"/>
</dbReference>
<dbReference type="HOGENOM" id="CLU_099839_1_0_7"/>
<dbReference type="OrthoDB" id="9801447at2"/>
<dbReference type="Proteomes" id="UP000002420">
    <property type="component" value="Chromosome"/>
</dbReference>
<dbReference type="GO" id="GO:0005829">
    <property type="term" value="C:cytosol"/>
    <property type="evidence" value="ECO:0007669"/>
    <property type="project" value="TreeGrafter"/>
</dbReference>
<dbReference type="GO" id="GO:0000166">
    <property type="term" value="F:nucleotide binding"/>
    <property type="evidence" value="ECO:0007669"/>
    <property type="project" value="TreeGrafter"/>
</dbReference>
<dbReference type="CDD" id="cd11740">
    <property type="entry name" value="YajQ_like"/>
    <property type="match status" value="1"/>
</dbReference>
<dbReference type="FunFam" id="3.30.70.990:FF:000002">
    <property type="entry name" value="UPF0234 protein LEP1GSC067_4943"/>
    <property type="match status" value="1"/>
</dbReference>
<dbReference type="Gene3D" id="3.30.70.860">
    <property type="match status" value="1"/>
</dbReference>
<dbReference type="Gene3D" id="3.30.70.990">
    <property type="entry name" value="YajQ-like, domain 2"/>
    <property type="match status" value="1"/>
</dbReference>
<dbReference type="HAMAP" id="MF_00632">
    <property type="entry name" value="YajQ"/>
    <property type="match status" value="1"/>
</dbReference>
<dbReference type="InterPro" id="IPR007551">
    <property type="entry name" value="DUF520"/>
</dbReference>
<dbReference type="InterPro" id="IPR035571">
    <property type="entry name" value="UPF0234-like_C"/>
</dbReference>
<dbReference type="InterPro" id="IPR035570">
    <property type="entry name" value="UPF0234_N"/>
</dbReference>
<dbReference type="InterPro" id="IPR036183">
    <property type="entry name" value="YajQ-like_sf"/>
</dbReference>
<dbReference type="NCBIfam" id="NF003819">
    <property type="entry name" value="PRK05412.1"/>
    <property type="match status" value="1"/>
</dbReference>
<dbReference type="PANTHER" id="PTHR30476">
    <property type="entry name" value="UPF0234 PROTEIN YAJQ"/>
    <property type="match status" value="1"/>
</dbReference>
<dbReference type="PANTHER" id="PTHR30476:SF0">
    <property type="entry name" value="UPF0234 PROTEIN YAJQ"/>
    <property type="match status" value="1"/>
</dbReference>
<dbReference type="Pfam" id="PF04461">
    <property type="entry name" value="DUF520"/>
    <property type="match status" value="1"/>
</dbReference>
<dbReference type="SUPFAM" id="SSF89963">
    <property type="entry name" value="YajQ-like"/>
    <property type="match status" value="2"/>
</dbReference>
<evidence type="ECO:0000255" key="1">
    <source>
        <dbReference type="HAMAP-Rule" id="MF_00632"/>
    </source>
</evidence>
<organism>
    <name type="scientific">Trichlorobacter lovleyi (strain ATCC BAA-1151 / DSM 17278 / SZ)</name>
    <name type="common">Geobacter lovleyi</name>
    <dbReference type="NCBI Taxonomy" id="398767"/>
    <lineage>
        <taxon>Bacteria</taxon>
        <taxon>Pseudomonadati</taxon>
        <taxon>Thermodesulfobacteriota</taxon>
        <taxon>Desulfuromonadia</taxon>
        <taxon>Geobacterales</taxon>
        <taxon>Geobacteraceae</taxon>
        <taxon>Trichlorobacter</taxon>
    </lineage>
</organism>
<feature type="chain" id="PRO_1000130630" description="Nucleotide-binding protein Glov_3198">
    <location>
        <begin position="1"/>
        <end position="161"/>
    </location>
</feature>
<name>Y3198_TRIL1</name>
<proteinExistence type="inferred from homology"/>
<protein>
    <recommendedName>
        <fullName evidence="1">Nucleotide-binding protein Glov_3198</fullName>
    </recommendedName>
</protein>
<sequence length="161" mass="18236">MPSFDIVSKVEMQEVDNAVNQAIKEIGQRYDFKGSKSEITQEKDAIKVLADDDYKLKAVIDVLQSKLHKRNISIKSLQYGKVEPASGGMVRQIISVQQGISKEKGKEIIAVIKESKLKVQAQIQDDQVRVTGKNRDDLQDTIQLLKGKDLDIEMQFTNFRE</sequence>
<accession>B3EA29</accession>
<reference key="1">
    <citation type="submission" date="2008-05" db="EMBL/GenBank/DDBJ databases">
        <title>Complete sequence of chromosome of Geobacter lovleyi SZ.</title>
        <authorList>
            <consortium name="US DOE Joint Genome Institute"/>
            <person name="Lucas S."/>
            <person name="Copeland A."/>
            <person name="Lapidus A."/>
            <person name="Glavina del Rio T."/>
            <person name="Dalin E."/>
            <person name="Tice H."/>
            <person name="Bruce D."/>
            <person name="Goodwin L."/>
            <person name="Pitluck S."/>
            <person name="Chertkov O."/>
            <person name="Meincke L."/>
            <person name="Brettin T."/>
            <person name="Detter J.C."/>
            <person name="Han C."/>
            <person name="Tapia R."/>
            <person name="Kuske C.R."/>
            <person name="Schmutz J."/>
            <person name="Larimer F."/>
            <person name="Land M."/>
            <person name="Hauser L."/>
            <person name="Kyrpides N."/>
            <person name="Mikhailova N."/>
            <person name="Sung Y."/>
            <person name="Fletcher K.E."/>
            <person name="Ritalahti K.M."/>
            <person name="Loeffler F.E."/>
            <person name="Richardson P."/>
        </authorList>
    </citation>
    <scope>NUCLEOTIDE SEQUENCE [LARGE SCALE GENOMIC DNA]</scope>
    <source>
        <strain>ATCC BAA-1151 / DSM 17278 / SZ</strain>
    </source>
</reference>
<comment type="function">
    <text evidence="1">Nucleotide-binding protein.</text>
</comment>
<comment type="similarity">
    <text evidence="1">Belongs to the YajQ family.</text>
</comment>